<comment type="function">
    <text evidence="1">Catalyzes the first reaction in the catabolism of the essential branched chain amino acids leucine, isoleucine, and valine.</text>
</comment>
<comment type="catalytic activity">
    <reaction>
        <text>L-leucine + 2-oxoglutarate = 4-methyl-2-oxopentanoate + L-glutamate</text>
        <dbReference type="Rhea" id="RHEA:18321"/>
        <dbReference type="ChEBI" id="CHEBI:16810"/>
        <dbReference type="ChEBI" id="CHEBI:17865"/>
        <dbReference type="ChEBI" id="CHEBI:29985"/>
        <dbReference type="ChEBI" id="CHEBI:57427"/>
        <dbReference type="EC" id="2.6.1.42"/>
    </reaction>
</comment>
<comment type="catalytic activity">
    <reaction>
        <text>L-isoleucine + 2-oxoglutarate = (S)-3-methyl-2-oxopentanoate + L-glutamate</text>
        <dbReference type="Rhea" id="RHEA:24801"/>
        <dbReference type="ChEBI" id="CHEBI:16810"/>
        <dbReference type="ChEBI" id="CHEBI:29985"/>
        <dbReference type="ChEBI" id="CHEBI:35146"/>
        <dbReference type="ChEBI" id="CHEBI:58045"/>
        <dbReference type="EC" id="2.6.1.42"/>
    </reaction>
</comment>
<comment type="catalytic activity">
    <reaction>
        <text>L-valine + 2-oxoglutarate = 3-methyl-2-oxobutanoate + L-glutamate</text>
        <dbReference type="Rhea" id="RHEA:24813"/>
        <dbReference type="ChEBI" id="CHEBI:11851"/>
        <dbReference type="ChEBI" id="CHEBI:16810"/>
        <dbReference type="ChEBI" id="CHEBI:29985"/>
        <dbReference type="ChEBI" id="CHEBI:57762"/>
        <dbReference type="EC" id="2.6.1.42"/>
    </reaction>
</comment>
<comment type="cofactor">
    <cofactor evidence="1">
        <name>pyridoxal 5'-phosphate</name>
        <dbReference type="ChEBI" id="CHEBI:597326"/>
    </cofactor>
</comment>
<comment type="subunit">
    <text evidence="1">Homodimer.</text>
</comment>
<comment type="similarity">
    <text evidence="2">Belongs to the class-IV pyridoxal-phosphate-dependent aminotransferase family.</text>
</comment>
<name>BCAT_MONBE</name>
<organism>
    <name type="scientific">Monosiga brevicollis</name>
    <name type="common">Choanoflagellate</name>
    <dbReference type="NCBI Taxonomy" id="81824"/>
    <lineage>
        <taxon>Eukaryota</taxon>
        <taxon>Choanoflagellata</taxon>
        <taxon>Craspedida</taxon>
        <taxon>Salpingoecidae</taxon>
        <taxon>Monosiga</taxon>
    </lineage>
</organism>
<proteinExistence type="inferred from homology"/>
<protein>
    <recommendedName>
        <fullName>Branched-chain-amino-acid aminotransferase</fullName>
        <ecNumber>2.6.1.42</ecNumber>
    </recommendedName>
</protein>
<reference key="1">
    <citation type="journal article" date="2008" name="Nature">
        <title>The genome of the choanoflagellate Monosiga brevicollis and the origin of metazoans.</title>
        <authorList>
            <consortium name="JGI Sequencing"/>
            <person name="King N."/>
            <person name="Westbrook M.J."/>
            <person name="Young S.L."/>
            <person name="Kuo A."/>
            <person name="Abedin M."/>
            <person name="Chapman J."/>
            <person name="Fairclough S."/>
            <person name="Hellsten U."/>
            <person name="Isogai Y."/>
            <person name="Letunic I."/>
            <person name="Marr M."/>
            <person name="Pincus D."/>
            <person name="Putnam N."/>
            <person name="Rokas A."/>
            <person name="Wright K.J."/>
            <person name="Zuzow R."/>
            <person name="Dirks W."/>
            <person name="Good M."/>
            <person name="Goodstein D."/>
            <person name="Lemons D."/>
            <person name="Li W."/>
            <person name="Lyons J.B."/>
            <person name="Morris A."/>
            <person name="Nichols S."/>
            <person name="Richter D.J."/>
            <person name="Salamov A."/>
            <person name="Bork P."/>
            <person name="Lim W.A."/>
            <person name="Manning G."/>
            <person name="Miller W.T."/>
            <person name="McGinnis W."/>
            <person name="Shapiro H."/>
            <person name="Tjian R."/>
            <person name="Grigoriev I.V."/>
            <person name="Rokhsar D."/>
        </authorList>
    </citation>
    <scope>NUCLEOTIDE SEQUENCE [LARGE SCALE GENOMIC DNA]</scope>
    <source>
        <strain>MX1 / ATCC 50154</strain>
    </source>
</reference>
<gene>
    <name type="ORF">37018</name>
</gene>
<evidence type="ECO:0000250" key="1"/>
<evidence type="ECO:0000305" key="2"/>
<keyword id="KW-0028">Amino-acid biosynthesis</keyword>
<keyword id="KW-0032">Aminotransferase</keyword>
<keyword id="KW-0100">Branched-chain amino acid biosynthesis</keyword>
<keyword id="KW-0663">Pyridoxal phosphate</keyword>
<keyword id="KW-1185">Reference proteome</keyword>
<keyword id="KW-0808">Transferase</keyword>
<dbReference type="EC" id="2.6.1.42"/>
<dbReference type="EMBL" id="CH991550">
    <property type="protein sequence ID" value="EDQ89710.1"/>
    <property type="molecule type" value="Genomic_DNA"/>
</dbReference>
<dbReference type="RefSeq" id="XP_001745739.1">
    <property type="nucleotide sequence ID" value="XM_001745687.1"/>
</dbReference>
<dbReference type="SMR" id="A9UZ24"/>
<dbReference type="FunCoup" id="A9UZ24">
    <property type="interactions" value="1130"/>
</dbReference>
<dbReference type="STRING" id="81824.A9UZ24"/>
<dbReference type="EnsemblProtists" id="EDQ89710">
    <property type="protein sequence ID" value="EDQ89710"/>
    <property type="gene ID" value="MONBRDRAFT_37018"/>
</dbReference>
<dbReference type="KEGG" id="mbr:MONBRDRAFT_37018"/>
<dbReference type="eggNOG" id="KOG0975">
    <property type="taxonomic scope" value="Eukaryota"/>
</dbReference>
<dbReference type="InParanoid" id="A9UZ24"/>
<dbReference type="OMA" id="LTEVFAC"/>
<dbReference type="Proteomes" id="UP000001357">
    <property type="component" value="Unassembled WGS sequence"/>
</dbReference>
<dbReference type="GO" id="GO:0005739">
    <property type="term" value="C:mitochondrion"/>
    <property type="evidence" value="ECO:0000318"/>
    <property type="project" value="GO_Central"/>
</dbReference>
<dbReference type="GO" id="GO:0004084">
    <property type="term" value="F:branched-chain-amino-acid transaminase activity"/>
    <property type="evidence" value="ECO:0000318"/>
    <property type="project" value="GO_Central"/>
</dbReference>
<dbReference type="GO" id="GO:0052656">
    <property type="term" value="F:L-isoleucine-2-oxoglutarate transaminase activity"/>
    <property type="evidence" value="ECO:0007669"/>
    <property type="project" value="RHEA"/>
</dbReference>
<dbReference type="GO" id="GO:0052654">
    <property type="term" value="F:L-leucine-2-oxoglutarate transaminase activity"/>
    <property type="evidence" value="ECO:0007669"/>
    <property type="project" value="RHEA"/>
</dbReference>
<dbReference type="GO" id="GO:0052655">
    <property type="term" value="F:L-valine-2-oxoglutarate transaminase activity"/>
    <property type="evidence" value="ECO:0007669"/>
    <property type="project" value="RHEA"/>
</dbReference>
<dbReference type="GO" id="GO:0009098">
    <property type="term" value="P:L-leucine biosynthetic process"/>
    <property type="evidence" value="ECO:0000318"/>
    <property type="project" value="GO_Central"/>
</dbReference>
<dbReference type="GO" id="GO:0009099">
    <property type="term" value="P:L-valine biosynthetic process"/>
    <property type="evidence" value="ECO:0000318"/>
    <property type="project" value="GO_Central"/>
</dbReference>
<dbReference type="CDD" id="cd01557">
    <property type="entry name" value="BCAT_beta_family"/>
    <property type="match status" value="1"/>
</dbReference>
<dbReference type="FunFam" id="3.20.10.10:FF:000004">
    <property type="entry name" value="Branched-chain-amino-acid aminotransferase"/>
    <property type="match status" value="1"/>
</dbReference>
<dbReference type="FunFam" id="3.30.470.10:FF:000002">
    <property type="entry name" value="Branched-chain-amino-acid aminotransferase"/>
    <property type="match status" value="1"/>
</dbReference>
<dbReference type="Gene3D" id="3.30.470.10">
    <property type="match status" value="1"/>
</dbReference>
<dbReference type="Gene3D" id="3.20.10.10">
    <property type="entry name" value="D-amino Acid Aminotransferase, subunit A, domain 2"/>
    <property type="match status" value="1"/>
</dbReference>
<dbReference type="InterPro" id="IPR001544">
    <property type="entry name" value="Aminotrans_IV"/>
</dbReference>
<dbReference type="InterPro" id="IPR018300">
    <property type="entry name" value="Aminotrans_IV_CS"/>
</dbReference>
<dbReference type="InterPro" id="IPR036038">
    <property type="entry name" value="Aminotransferase-like"/>
</dbReference>
<dbReference type="InterPro" id="IPR005786">
    <property type="entry name" value="B_amino_transII"/>
</dbReference>
<dbReference type="InterPro" id="IPR043132">
    <property type="entry name" value="BCAT-like_C"/>
</dbReference>
<dbReference type="InterPro" id="IPR043131">
    <property type="entry name" value="BCAT-like_N"/>
</dbReference>
<dbReference type="InterPro" id="IPR033939">
    <property type="entry name" value="BCAT_family"/>
</dbReference>
<dbReference type="NCBIfam" id="TIGR01123">
    <property type="entry name" value="ilvE_II"/>
    <property type="match status" value="1"/>
</dbReference>
<dbReference type="NCBIfam" id="NF009897">
    <property type="entry name" value="PRK13357.1"/>
    <property type="match status" value="1"/>
</dbReference>
<dbReference type="PANTHER" id="PTHR11825:SF44">
    <property type="entry name" value="BRANCHED-CHAIN-AMINO-ACID AMINOTRANSFERASE"/>
    <property type="match status" value="1"/>
</dbReference>
<dbReference type="PANTHER" id="PTHR11825">
    <property type="entry name" value="SUBGROUP IIII AMINOTRANSFERASE"/>
    <property type="match status" value="1"/>
</dbReference>
<dbReference type="Pfam" id="PF01063">
    <property type="entry name" value="Aminotran_4"/>
    <property type="match status" value="1"/>
</dbReference>
<dbReference type="PIRSF" id="PIRSF006468">
    <property type="entry name" value="BCAT1"/>
    <property type="match status" value="1"/>
</dbReference>
<dbReference type="SUPFAM" id="SSF56752">
    <property type="entry name" value="D-aminoacid aminotransferase-like PLP-dependent enzymes"/>
    <property type="match status" value="1"/>
</dbReference>
<dbReference type="PROSITE" id="PS00770">
    <property type="entry name" value="AA_TRANSFER_CLASS_4"/>
    <property type="match status" value="1"/>
</dbReference>
<accession>A9UZ24</accession>
<sequence length="390" mass="43290">MAAALRLTPHMRQAYPVVAAPSVARLSTLDASKLTIETTTQPRERVEKTKLVFGHTFSDHMLKCKWDVNEGWAAPTISPYANLSLAPSSIVLHYAIECFEGMKAFRGDDDRIRLFRPNLNMDRLHRSSVRLALPDFDQDELLKCITELVIKDKDWIPAGRGYSLYLRPTHIGTAEYLGVGKSSSSLLFCINSPSGAYYSTGFKPVSLLADPAYVRAWPGGVGNTKGGCNYAPSIYPQSQAQAQGCQQVLWLFGEDHEVTEVGTMNLFMYWKNEQGEDELITPPLDGTILPGVTRQSIVDMARGWNEFKVSERKFNMGQVSRALKEGRVYEMFGAGTAATVCPIGQIKYLGEDLNVPLALGNSGELTNRIWTDIFDIQYGAVEHEWAPVIA</sequence>
<feature type="chain" id="PRO_0000340237" description="Branched-chain-amino-acid aminotransferase">
    <location>
        <begin position="1"/>
        <end position="390"/>
    </location>
</feature>
<feature type="modified residue" description="N6-(pyridoxal phosphate)lysine" evidence="1">
    <location>
        <position position="225"/>
    </location>
</feature>